<accession>Q5E8A7</accession>
<sequence length="63" mass="7287">MKAQDLREKNVEELNEELLNLLREQFNLRMQAATGQLQQTHTLKAVRRDIARVKTLLNEKAGA</sequence>
<feature type="chain" id="PRO_0000130492" description="Large ribosomal subunit protein uL29">
    <location>
        <begin position="1"/>
        <end position="63"/>
    </location>
</feature>
<reference key="1">
    <citation type="journal article" date="2005" name="Proc. Natl. Acad. Sci. U.S.A.">
        <title>Complete genome sequence of Vibrio fischeri: a symbiotic bacterium with pathogenic congeners.</title>
        <authorList>
            <person name="Ruby E.G."/>
            <person name="Urbanowski M."/>
            <person name="Campbell J."/>
            <person name="Dunn A."/>
            <person name="Faini M."/>
            <person name="Gunsalus R."/>
            <person name="Lostroh P."/>
            <person name="Lupp C."/>
            <person name="McCann J."/>
            <person name="Millikan D."/>
            <person name="Schaefer A."/>
            <person name="Stabb E."/>
            <person name="Stevens A."/>
            <person name="Visick K."/>
            <person name="Whistler C."/>
            <person name="Greenberg E.P."/>
        </authorList>
    </citation>
    <scope>NUCLEOTIDE SEQUENCE [LARGE SCALE GENOMIC DNA]</scope>
    <source>
        <strain>ATCC 700601 / ES114</strain>
    </source>
</reference>
<protein>
    <recommendedName>
        <fullName evidence="1">Large ribosomal subunit protein uL29</fullName>
    </recommendedName>
    <alternativeName>
        <fullName evidence="2">50S ribosomal protein L29</fullName>
    </alternativeName>
</protein>
<organism>
    <name type="scientific">Aliivibrio fischeri (strain ATCC 700601 / ES114)</name>
    <name type="common">Vibrio fischeri</name>
    <dbReference type="NCBI Taxonomy" id="312309"/>
    <lineage>
        <taxon>Bacteria</taxon>
        <taxon>Pseudomonadati</taxon>
        <taxon>Pseudomonadota</taxon>
        <taxon>Gammaproteobacteria</taxon>
        <taxon>Vibrionales</taxon>
        <taxon>Vibrionaceae</taxon>
        <taxon>Aliivibrio</taxon>
    </lineage>
</organism>
<proteinExistence type="inferred from homology"/>
<dbReference type="EMBL" id="CP000020">
    <property type="protein sequence ID" value="AAW84739.1"/>
    <property type="molecule type" value="Genomic_DNA"/>
</dbReference>
<dbReference type="RefSeq" id="WP_005417238.1">
    <property type="nucleotide sequence ID" value="NZ_CAWLES010000001.1"/>
</dbReference>
<dbReference type="RefSeq" id="YP_203627.1">
    <property type="nucleotide sequence ID" value="NC_006840.2"/>
</dbReference>
<dbReference type="SMR" id="Q5E8A7"/>
<dbReference type="STRING" id="312309.VF_0244"/>
<dbReference type="EnsemblBacteria" id="AAW84739">
    <property type="protein sequence ID" value="AAW84739"/>
    <property type="gene ID" value="VF_0244"/>
</dbReference>
<dbReference type="GeneID" id="56276447"/>
<dbReference type="KEGG" id="vfi:VF_0244"/>
<dbReference type="PATRIC" id="fig|312309.11.peg.240"/>
<dbReference type="eggNOG" id="COG0255">
    <property type="taxonomic scope" value="Bacteria"/>
</dbReference>
<dbReference type="HOGENOM" id="CLU_158491_1_2_6"/>
<dbReference type="OrthoDB" id="9815192at2"/>
<dbReference type="PRO" id="PR:Q5E8A7"/>
<dbReference type="Proteomes" id="UP000000537">
    <property type="component" value="Chromosome I"/>
</dbReference>
<dbReference type="GO" id="GO:0022625">
    <property type="term" value="C:cytosolic large ribosomal subunit"/>
    <property type="evidence" value="ECO:0007669"/>
    <property type="project" value="TreeGrafter"/>
</dbReference>
<dbReference type="GO" id="GO:0003735">
    <property type="term" value="F:structural constituent of ribosome"/>
    <property type="evidence" value="ECO:0007669"/>
    <property type="project" value="InterPro"/>
</dbReference>
<dbReference type="GO" id="GO:0006412">
    <property type="term" value="P:translation"/>
    <property type="evidence" value="ECO:0007669"/>
    <property type="project" value="UniProtKB-UniRule"/>
</dbReference>
<dbReference type="CDD" id="cd00427">
    <property type="entry name" value="Ribosomal_L29_HIP"/>
    <property type="match status" value="1"/>
</dbReference>
<dbReference type="Gene3D" id="6.10.140.1970">
    <property type="match status" value="1"/>
</dbReference>
<dbReference type="HAMAP" id="MF_00374">
    <property type="entry name" value="Ribosomal_uL29"/>
    <property type="match status" value="1"/>
</dbReference>
<dbReference type="InterPro" id="IPR050063">
    <property type="entry name" value="Ribosomal_protein_uL29"/>
</dbReference>
<dbReference type="InterPro" id="IPR001854">
    <property type="entry name" value="Ribosomal_uL29"/>
</dbReference>
<dbReference type="InterPro" id="IPR018254">
    <property type="entry name" value="Ribosomal_uL29_CS"/>
</dbReference>
<dbReference type="InterPro" id="IPR036049">
    <property type="entry name" value="Ribosomal_uL29_sf"/>
</dbReference>
<dbReference type="NCBIfam" id="TIGR00012">
    <property type="entry name" value="L29"/>
    <property type="match status" value="1"/>
</dbReference>
<dbReference type="PANTHER" id="PTHR10916">
    <property type="entry name" value="60S RIBOSOMAL PROTEIN L35/50S RIBOSOMAL PROTEIN L29"/>
    <property type="match status" value="1"/>
</dbReference>
<dbReference type="PANTHER" id="PTHR10916:SF0">
    <property type="entry name" value="LARGE RIBOSOMAL SUBUNIT PROTEIN UL29C"/>
    <property type="match status" value="1"/>
</dbReference>
<dbReference type="Pfam" id="PF00831">
    <property type="entry name" value="Ribosomal_L29"/>
    <property type="match status" value="1"/>
</dbReference>
<dbReference type="SUPFAM" id="SSF46561">
    <property type="entry name" value="Ribosomal protein L29 (L29p)"/>
    <property type="match status" value="1"/>
</dbReference>
<dbReference type="PROSITE" id="PS00579">
    <property type="entry name" value="RIBOSOMAL_L29"/>
    <property type="match status" value="1"/>
</dbReference>
<comment type="similarity">
    <text evidence="1">Belongs to the universal ribosomal protein uL29 family.</text>
</comment>
<gene>
    <name evidence="1" type="primary">rpmC</name>
    <name type="ordered locus">VF_0244</name>
</gene>
<evidence type="ECO:0000255" key="1">
    <source>
        <dbReference type="HAMAP-Rule" id="MF_00374"/>
    </source>
</evidence>
<evidence type="ECO:0000305" key="2"/>
<keyword id="KW-1185">Reference proteome</keyword>
<keyword id="KW-0687">Ribonucleoprotein</keyword>
<keyword id="KW-0689">Ribosomal protein</keyword>
<name>RL29_ALIF1</name>